<sequence length="175" mass="19397">MAATATACPAPPPPRSLYRGVALAAPGRRRAGYGASSSAARRWPGCRRRWAAHRIRTVSCAYSPRGAKTITACSWNEYVICSDIPVLIEFWASWCGPCRMVHRIVDEIAQEYAGRIKCYKLDTDDYPQVATSYSIERIPTVLLFKDGEKTHSITGTLPKAVYVRAIEKSISDSEQ</sequence>
<reference key="1">
    <citation type="journal article" date="2002" name="Nature">
        <title>Sequence and analysis of rice chromosome 4.</title>
        <authorList>
            <person name="Feng Q."/>
            <person name="Zhang Y."/>
            <person name="Hao P."/>
            <person name="Wang S."/>
            <person name="Fu G."/>
            <person name="Huang Y."/>
            <person name="Li Y."/>
            <person name="Zhu J."/>
            <person name="Liu Y."/>
            <person name="Hu X."/>
            <person name="Jia P."/>
            <person name="Zhang Y."/>
            <person name="Zhao Q."/>
            <person name="Ying K."/>
            <person name="Yu S."/>
            <person name="Tang Y."/>
            <person name="Weng Q."/>
            <person name="Zhang L."/>
            <person name="Lu Y."/>
            <person name="Mu J."/>
            <person name="Lu Y."/>
            <person name="Zhang L.S."/>
            <person name="Yu Z."/>
            <person name="Fan D."/>
            <person name="Liu X."/>
            <person name="Lu T."/>
            <person name="Li C."/>
            <person name="Wu Y."/>
            <person name="Sun T."/>
            <person name="Lei H."/>
            <person name="Li T."/>
            <person name="Hu H."/>
            <person name="Guan J."/>
            <person name="Wu M."/>
            <person name="Zhang R."/>
            <person name="Zhou B."/>
            <person name="Chen Z."/>
            <person name="Chen L."/>
            <person name="Jin Z."/>
            <person name="Wang R."/>
            <person name="Yin H."/>
            <person name="Cai Z."/>
            <person name="Ren S."/>
            <person name="Lv G."/>
            <person name="Gu W."/>
            <person name="Zhu G."/>
            <person name="Tu Y."/>
            <person name="Jia J."/>
            <person name="Zhang Y."/>
            <person name="Chen J."/>
            <person name="Kang H."/>
            <person name="Chen X."/>
            <person name="Shao C."/>
            <person name="Sun Y."/>
            <person name="Hu Q."/>
            <person name="Zhang X."/>
            <person name="Zhang W."/>
            <person name="Wang L."/>
            <person name="Ding C."/>
            <person name="Sheng H."/>
            <person name="Gu J."/>
            <person name="Chen S."/>
            <person name="Ni L."/>
            <person name="Zhu F."/>
            <person name="Chen W."/>
            <person name="Lan L."/>
            <person name="Lai Y."/>
            <person name="Cheng Z."/>
            <person name="Gu M."/>
            <person name="Jiang J."/>
            <person name="Li J."/>
            <person name="Hong G."/>
            <person name="Xue Y."/>
            <person name="Han B."/>
        </authorList>
    </citation>
    <scope>NUCLEOTIDE SEQUENCE [LARGE SCALE GENOMIC DNA]</scope>
    <source>
        <strain>cv. Nipponbare</strain>
    </source>
</reference>
<reference key="2">
    <citation type="journal article" date="2005" name="Nature">
        <title>The map-based sequence of the rice genome.</title>
        <authorList>
            <consortium name="International rice genome sequencing project (IRGSP)"/>
        </authorList>
    </citation>
    <scope>NUCLEOTIDE SEQUENCE [LARGE SCALE GENOMIC DNA]</scope>
    <source>
        <strain>cv. Nipponbare</strain>
    </source>
</reference>
<reference key="3">
    <citation type="journal article" date="2008" name="Nucleic Acids Res.">
        <title>The rice annotation project database (RAP-DB): 2008 update.</title>
        <authorList>
            <consortium name="The rice annotation project (RAP)"/>
        </authorList>
    </citation>
    <scope>GENOME REANNOTATION</scope>
    <source>
        <strain>cv. Nipponbare</strain>
    </source>
</reference>
<reference key="4">
    <citation type="journal article" date="2013" name="Rice">
        <title>Improvement of the Oryza sativa Nipponbare reference genome using next generation sequence and optical map data.</title>
        <authorList>
            <person name="Kawahara Y."/>
            <person name="de la Bastide M."/>
            <person name="Hamilton J.P."/>
            <person name="Kanamori H."/>
            <person name="McCombie W.R."/>
            <person name="Ouyang S."/>
            <person name="Schwartz D.C."/>
            <person name="Tanaka T."/>
            <person name="Wu J."/>
            <person name="Zhou S."/>
            <person name="Childs K.L."/>
            <person name="Davidson R.M."/>
            <person name="Lin H."/>
            <person name="Quesada-Ocampo L."/>
            <person name="Vaillancourt B."/>
            <person name="Sakai H."/>
            <person name="Lee S.S."/>
            <person name="Kim J."/>
            <person name="Numa H."/>
            <person name="Itoh T."/>
            <person name="Buell C.R."/>
            <person name="Matsumoto T."/>
        </authorList>
    </citation>
    <scope>GENOME REANNOTATION</scope>
    <source>
        <strain>cv. Nipponbare</strain>
    </source>
</reference>
<reference key="5">
    <citation type="submission" date="2007-09" db="EMBL/GenBank/DDBJ databases">
        <title>Oryza sativa full length cDNA.</title>
        <authorList>
            <consortium name="The rice full-length cDNA consortium"/>
        </authorList>
    </citation>
    <scope>NUCLEOTIDE SEQUENCE [LARGE SCALE MRNA]</scope>
    <source>
        <strain>cv. Nipponbare</strain>
    </source>
</reference>
<reference key="6">
    <citation type="journal article" date="2009" name="Mol. Plant">
        <title>Comparative genomic study of the thioredoxin family in photosynthetic organisms with emphasis on Populus trichocarpa.</title>
        <authorList>
            <person name="Chibani K."/>
            <person name="Wingsle G."/>
            <person name="Jacquot J.P."/>
            <person name="Gelhaye E."/>
            <person name="Rouhier N."/>
        </authorList>
    </citation>
    <scope>GENE FAMILY</scope>
    <scope>NOMENCLATURE</scope>
</reference>
<gene>
    <name type="ordered locus">Os04g0430800</name>
    <name type="ordered locus">LOC_Os04g35150</name>
    <name type="ORF">OSJNBa0084A10.3</name>
</gene>
<comment type="function">
    <text>Probable thiol-disulfide oxidoreductase that may be involved in the redox regulation of chloroplastic enzymes.</text>
</comment>
<comment type="subcellular location">
    <subcellularLocation>
        <location evidence="4">Plastid</location>
        <location evidence="4">Chloroplast</location>
    </subcellularLocation>
</comment>
<comment type="similarity">
    <text evidence="4">Belongs to the thioredoxin family. Plant M-type subfamily.</text>
</comment>
<keyword id="KW-0150">Chloroplast</keyword>
<keyword id="KW-1015">Disulfide bond</keyword>
<keyword id="KW-0249">Electron transport</keyword>
<keyword id="KW-0934">Plastid</keyword>
<keyword id="KW-0676">Redox-active center</keyword>
<keyword id="KW-1185">Reference proteome</keyword>
<keyword id="KW-0809">Transit peptide</keyword>
<keyword id="KW-0813">Transport</keyword>
<dbReference type="EMBL" id="AL606458">
    <property type="protein sequence ID" value="CAE03028.3"/>
    <property type="molecule type" value="Genomic_DNA"/>
</dbReference>
<dbReference type="EMBL" id="AP008210">
    <property type="protein sequence ID" value="BAH92673.1"/>
    <property type="molecule type" value="Genomic_DNA"/>
</dbReference>
<dbReference type="EMBL" id="AP014960">
    <property type="protein sequence ID" value="BAS89258.1"/>
    <property type="molecule type" value="Genomic_DNA"/>
</dbReference>
<dbReference type="EMBL" id="AK288574">
    <property type="status" value="NOT_ANNOTATED_CDS"/>
    <property type="molecule type" value="mRNA"/>
</dbReference>
<dbReference type="RefSeq" id="XP_015635015.1">
    <property type="nucleotide sequence ID" value="XM_015779529.1"/>
</dbReference>
<dbReference type="SMR" id="Q7XQQ2"/>
<dbReference type="FunCoup" id="Q7XQQ2">
    <property type="interactions" value="952"/>
</dbReference>
<dbReference type="STRING" id="39947.Q7XQQ2"/>
<dbReference type="PaxDb" id="39947-Q7XQQ2"/>
<dbReference type="EnsemblPlants" id="Os04t0430800-01">
    <property type="protein sequence ID" value="Os04t0430800-01"/>
    <property type="gene ID" value="Os04g0430800"/>
</dbReference>
<dbReference type="Gramene" id="Os04t0430800-01">
    <property type="protein sequence ID" value="Os04t0430800-01"/>
    <property type="gene ID" value="Os04g0430800"/>
</dbReference>
<dbReference type="KEGG" id="dosa:Os04g0430800"/>
<dbReference type="eggNOG" id="KOG0910">
    <property type="taxonomic scope" value="Eukaryota"/>
</dbReference>
<dbReference type="InParanoid" id="Q7XQQ2"/>
<dbReference type="OMA" id="EPMRSGE"/>
<dbReference type="OrthoDB" id="2121326at2759"/>
<dbReference type="Proteomes" id="UP000000763">
    <property type="component" value="Chromosome 4"/>
</dbReference>
<dbReference type="Proteomes" id="UP000059680">
    <property type="component" value="Chromosome 4"/>
</dbReference>
<dbReference type="ExpressionAtlas" id="Q7XQQ2">
    <property type="expression patterns" value="baseline and differential"/>
</dbReference>
<dbReference type="GO" id="GO:0009507">
    <property type="term" value="C:chloroplast"/>
    <property type="evidence" value="ECO:0007669"/>
    <property type="project" value="UniProtKB-SubCell"/>
</dbReference>
<dbReference type="GO" id="GO:0005737">
    <property type="term" value="C:cytoplasm"/>
    <property type="evidence" value="ECO:0000318"/>
    <property type="project" value="GO_Central"/>
</dbReference>
<dbReference type="GO" id="GO:0015035">
    <property type="term" value="F:protein-disulfide reductase activity"/>
    <property type="evidence" value="ECO:0000318"/>
    <property type="project" value="GO_Central"/>
</dbReference>
<dbReference type="CDD" id="cd02947">
    <property type="entry name" value="TRX_family"/>
    <property type="match status" value="1"/>
</dbReference>
<dbReference type="FunFam" id="3.40.30.10:FF:000001">
    <property type="entry name" value="Thioredoxin"/>
    <property type="match status" value="1"/>
</dbReference>
<dbReference type="Gene3D" id="3.40.30.10">
    <property type="entry name" value="Glutaredoxin"/>
    <property type="match status" value="1"/>
</dbReference>
<dbReference type="InterPro" id="IPR005746">
    <property type="entry name" value="Thioredoxin"/>
</dbReference>
<dbReference type="InterPro" id="IPR036249">
    <property type="entry name" value="Thioredoxin-like_sf"/>
</dbReference>
<dbReference type="InterPro" id="IPR017937">
    <property type="entry name" value="Thioredoxin_CS"/>
</dbReference>
<dbReference type="InterPro" id="IPR013766">
    <property type="entry name" value="Thioredoxin_domain"/>
</dbReference>
<dbReference type="NCBIfam" id="TIGR01068">
    <property type="entry name" value="thioredoxin"/>
    <property type="match status" value="1"/>
</dbReference>
<dbReference type="PANTHER" id="PTHR45663">
    <property type="entry name" value="GEO12009P1"/>
    <property type="match status" value="1"/>
</dbReference>
<dbReference type="PANTHER" id="PTHR45663:SF21">
    <property type="entry name" value="THIOREDOXIN M3, CHLOROPLASTIC"/>
    <property type="match status" value="1"/>
</dbReference>
<dbReference type="Pfam" id="PF00085">
    <property type="entry name" value="Thioredoxin"/>
    <property type="match status" value="1"/>
</dbReference>
<dbReference type="PRINTS" id="PR00421">
    <property type="entry name" value="THIOREDOXIN"/>
</dbReference>
<dbReference type="SUPFAM" id="SSF52833">
    <property type="entry name" value="Thioredoxin-like"/>
    <property type="match status" value="1"/>
</dbReference>
<dbReference type="PROSITE" id="PS00194">
    <property type="entry name" value="THIOREDOXIN_1"/>
    <property type="match status" value="1"/>
</dbReference>
<dbReference type="PROSITE" id="PS51352">
    <property type="entry name" value="THIOREDOXIN_2"/>
    <property type="match status" value="1"/>
</dbReference>
<name>TRXM3_ORYSJ</name>
<evidence type="ECO:0000250" key="1"/>
<evidence type="ECO:0000255" key="2"/>
<evidence type="ECO:0000255" key="3">
    <source>
        <dbReference type="PROSITE-ProRule" id="PRU00691"/>
    </source>
</evidence>
<evidence type="ECO:0000305" key="4"/>
<feature type="transit peptide" description="Chloroplast" evidence="2">
    <location>
        <begin position="1"/>
        <end position="59"/>
    </location>
</feature>
<feature type="chain" id="PRO_0000394833" description="Thioredoxin M3, chloroplastic">
    <location>
        <begin position="60"/>
        <end position="175"/>
    </location>
</feature>
<feature type="domain" description="Thioredoxin" evidence="3">
    <location>
        <begin position="61"/>
        <end position="171"/>
    </location>
</feature>
<feature type="active site" description="Nucleophile" evidence="1">
    <location>
        <position position="95"/>
    </location>
</feature>
<feature type="active site" description="Nucleophile" evidence="1">
    <location>
        <position position="98"/>
    </location>
</feature>
<feature type="site" description="Contributes to redox potential value" evidence="1">
    <location>
        <position position="96"/>
    </location>
</feature>
<feature type="site" description="Contributes to redox potential value" evidence="1">
    <location>
        <position position="97"/>
    </location>
</feature>
<feature type="disulfide bond" description="Redox-active" evidence="3">
    <location>
        <begin position="95"/>
        <end position="98"/>
    </location>
</feature>
<proteinExistence type="evidence at transcript level"/>
<protein>
    <recommendedName>
        <fullName>Thioredoxin M3, chloroplastic</fullName>
        <shortName>OsTrxm3</shortName>
    </recommendedName>
    <alternativeName>
        <fullName>OsTrx11</fullName>
    </alternativeName>
</protein>
<accession>Q7XQQ2</accession>
<accession>A0A0P0WAC2</accession>
<accession>C7J1C6</accession>
<organism>
    <name type="scientific">Oryza sativa subsp. japonica</name>
    <name type="common">Rice</name>
    <dbReference type="NCBI Taxonomy" id="39947"/>
    <lineage>
        <taxon>Eukaryota</taxon>
        <taxon>Viridiplantae</taxon>
        <taxon>Streptophyta</taxon>
        <taxon>Embryophyta</taxon>
        <taxon>Tracheophyta</taxon>
        <taxon>Spermatophyta</taxon>
        <taxon>Magnoliopsida</taxon>
        <taxon>Liliopsida</taxon>
        <taxon>Poales</taxon>
        <taxon>Poaceae</taxon>
        <taxon>BOP clade</taxon>
        <taxon>Oryzoideae</taxon>
        <taxon>Oryzeae</taxon>
        <taxon>Oryzinae</taxon>
        <taxon>Oryza</taxon>
        <taxon>Oryza sativa</taxon>
    </lineage>
</organism>